<evidence type="ECO:0000255" key="1">
    <source>
        <dbReference type="HAMAP-Rule" id="MF_00688"/>
    </source>
</evidence>
<comment type="function">
    <text evidence="1">Functions in the N-end rule pathway of protein degradation where it conjugates Leu, Phe and, less efficiently, Met from aminoacyl-tRNAs to the N-termini of proteins containing an N-terminal arginine or lysine.</text>
</comment>
<comment type="catalytic activity">
    <reaction evidence="1">
        <text>N-terminal L-lysyl-[protein] + L-leucyl-tRNA(Leu) = N-terminal L-leucyl-L-lysyl-[protein] + tRNA(Leu) + H(+)</text>
        <dbReference type="Rhea" id="RHEA:12340"/>
        <dbReference type="Rhea" id="RHEA-COMP:9613"/>
        <dbReference type="Rhea" id="RHEA-COMP:9622"/>
        <dbReference type="Rhea" id="RHEA-COMP:12670"/>
        <dbReference type="Rhea" id="RHEA-COMP:12671"/>
        <dbReference type="ChEBI" id="CHEBI:15378"/>
        <dbReference type="ChEBI" id="CHEBI:65249"/>
        <dbReference type="ChEBI" id="CHEBI:78442"/>
        <dbReference type="ChEBI" id="CHEBI:78494"/>
        <dbReference type="ChEBI" id="CHEBI:133043"/>
        <dbReference type="EC" id="2.3.2.6"/>
    </reaction>
</comment>
<comment type="catalytic activity">
    <reaction evidence="1">
        <text>N-terminal L-arginyl-[protein] + L-leucyl-tRNA(Leu) = N-terminal L-leucyl-L-arginyl-[protein] + tRNA(Leu) + H(+)</text>
        <dbReference type="Rhea" id="RHEA:50416"/>
        <dbReference type="Rhea" id="RHEA-COMP:9613"/>
        <dbReference type="Rhea" id="RHEA-COMP:9622"/>
        <dbReference type="Rhea" id="RHEA-COMP:12672"/>
        <dbReference type="Rhea" id="RHEA-COMP:12673"/>
        <dbReference type="ChEBI" id="CHEBI:15378"/>
        <dbReference type="ChEBI" id="CHEBI:64719"/>
        <dbReference type="ChEBI" id="CHEBI:78442"/>
        <dbReference type="ChEBI" id="CHEBI:78494"/>
        <dbReference type="ChEBI" id="CHEBI:133044"/>
        <dbReference type="EC" id="2.3.2.6"/>
    </reaction>
</comment>
<comment type="catalytic activity">
    <reaction evidence="1">
        <text>L-phenylalanyl-tRNA(Phe) + an N-terminal L-alpha-aminoacyl-[protein] = an N-terminal L-phenylalanyl-L-alpha-aminoacyl-[protein] + tRNA(Phe)</text>
        <dbReference type="Rhea" id="RHEA:43632"/>
        <dbReference type="Rhea" id="RHEA-COMP:9668"/>
        <dbReference type="Rhea" id="RHEA-COMP:9699"/>
        <dbReference type="Rhea" id="RHEA-COMP:10636"/>
        <dbReference type="Rhea" id="RHEA-COMP:10637"/>
        <dbReference type="ChEBI" id="CHEBI:78442"/>
        <dbReference type="ChEBI" id="CHEBI:78531"/>
        <dbReference type="ChEBI" id="CHEBI:78597"/>
        <dbReference type="ChEBI" id="CHEBI:83561"/>
        <dbReference type="EC" id="2.3.2.6"/>
    </reaction>
</comment>
<comment type="subcellular location">
    <subcellularLocation>
        <location evidence="1">Cytoplasm</location>
    </subcellularLocation>
</comment>
<comment type="similarity">
    <text evidence="1">Belongs to the L/F-transferase family.</text>
</comment>
<protein>
    <recommendedName>
        <fullName evidence="1">Leucyl/phenylalanyl-tRNA--protein transferase</fullName>
        <ecNumber evidence="1">2.3.2.6</ecNumber>
    </recommendedName>
    <alternativeName>
        <fullName evidence="1">L/F-transferase</fullName>
    </alternativeName>
    <alternativeName>
        <fullName evidence="1">Leucyltransferase</fullName>
    </alternativeName>
    <alternativeName>
        <fullName evidence="1">Phenyalanyltransferase</fullName>
    </alternativeName>
</protein>
<dbReference type="EC" id="2.3.2.6" evidence="1"/>
<dbReference type="EMBL" id="CP001322">
    <property type="protein sequence ID" value="ACL03781.1"/>
    <property type="molecule type" value="Genomic_DNA"/>
</dbReference>
<dbReference type="RefSeq" id="WP_015946858.1">
    <property type="nucleotide sequence ID" value="NC_011768.1"/>
</dbReference>
<dbReference type="SMR" id="B8FGA1"/>
<dbReference type="KEGG" id="dal:Dalk_2087"/>
<dbReference type="eggNOG" id="COG2360">
    <property type="taxonomic scope" value="Bacteria"/>
</dbReference>
<dbReference type="HOGENOM" id="CLU_075045_0_0_7"/>
<dbReference type="Proteomes" id="UP000000739">
    <property type="component" value="Chromosome"/>
</dbReference>
<dbReference type="GO" id="GO:0005737">
    <property type="term" value="C:cytoplasm"/>
    <property type="evidence" value="ECO:0007669"/>
    <property type="project" value="UniProtKB-SubCell"/>
</dbReference>
<dbReference type="GO" id="GO:0008914">
    <property type="term" value="F:leucyl-tRNA--protein transferase activity"/>
    <property type="evidence" value="ECO:0007669"/>
    <property type="project" value="UniProtKB-UniRule"/>
</dbReference>
<dbReference type="GO" id="GO:0030163">
    <property type="term" value="P:protein catabolic process"/>
    <property type="evidence" value="ECO:0007669"/>
    <property type="project" value="UniProtKB-UniRule"/>
</dbReference>
<dbReference type="FunFam" id="3.30.70.3550:FF:000001">
    <property type="entry name" value="Leucyl/phenylalanyl-tRNA--protein transferase"/>
    <property type="match status" value="1"/>
</dbReference>
<dbReference type="FunFam" id="3.40.630.70:FF:000001">
    <property type="entry name" value="Leucyl/phenylalanyl-tRNA--protein transferase"/>
    <property type="match status" value="1"/>
</dbReference>
<dbReference type="Gene3D" id="3.40.630.70">
    <property type="entry name" value="Leucyl/phenylalanyl-tRNA-protein transferase, C-terminal domain"/>
    <property type="match status" value="1"/>
</dbReference>
<dbReference type="Gene3D" id="3.30.70.3550">
    <property type="entry name" value="Leucyl/phenylalanyl-tRNA-protein transferase, N-terminal domain"/>
    <property type="match status" value="1"/>
</dbReference>
<dbReference type="HAMAP" id="MF_00688">
    <property type="entry name" value="Leu_Phe_trans"/>
    <property type="match status" value="1"/>
</dbReference>
<dbReference type="InterPro" id="IPR016181">
    <property type="entry name" value="Acyl_CoA_acyltransferase"/>
</dbReference>
<dbReference type="InterPro" id="IPR004616">
    <property type="entry name" value="Leu/Phe-tRNA_Trfase"/>
</dbReference>
<dbReference type="InterPro" id="IPR042203">
    <property type="entry name" value="Leu/Phe-tRNA_Trfase_C"/>
</dbReference>
<dbReference type="InterPro" id="IPR042221">
    <property type="entry name" value="Leu/Phe-tRNA_Trfase_N"/>
</dbReference>
<dbReference type="NCBIfam" id="TIGR00667">
    <property type="entry name" value="aat"/>
    <property type="match status" value="1"/>
</dbReference>
<dbReference type="PANTHER" id="PTHR30098">
    <property type="entry name" value="LEUCYL/PHENYLALANYL-TRNA--PROTEIN TRANSFERASE"/>
    <property type="match status" value="1"/>
</dbReference>
<dbReference type="PANTHER" id="PTHR30098:SF2">
    <property type="entry name" value="LEUCYL_PHENYLALANYL-TRNA--PROTEIN TRANSFERASE"/>
    <property type="match status" value="1"/>
</dbReference>
<dbReference type="Pfam" id="PF03588">
    <property type="entry name" value="Leu_Phe_trans"/>
    <property type="match status" value="1"/>
</dbReference>
<dbReference type="SUPFAM" id="SSF55729">
    <property type="entry name" value="Acyl-CoA N-acyltransferases (Nat)"/>
    <property type="match status" value="1"/>
</dbReference>
<gene>
    <name evidence="1" type="primary">aat</name>
    <name type="ordered locus">Dalk_2087</name>
</gene>
<accession>B8FGA1</accession>
<reference key="1">
    <citation type="journal article" date="2012" name="Environ. Microbiol.">
        <title>The genome sequence of Desulfatibacillum alkenivorans AK-01: a blueprint for anaerobic alkane oxidation.</title>
        <authorList>
            <person name="Callaghan A.V."/>
            <person name="Morris B.E."/>
            <person name="Pereira I.A."/>
            <person name="McInerney M.J."/>
            <person name="Austin R.N."/>
            <person name="Groves J.T."/>
            <person name="Kukor J.J."/>
            <person name="Suflita J.M."/>
            <person name="Young L.Y."/>
            <person name="Zylstra G.J."/>
            <person name="Wawrik B."/>
        </authorList>
    </citation>
    <scope>NUCLEOTIDE SEQUENCE [LARGE SCALE GENOMIC DNA]</scope>
    <source>
        <strain>AK-01</strain>
    </source>
</reference>
<sequence>MPVYALSEAICFPDPSLARADGLLAVGGDLSPERLLNAYCMGIFPWYSEGEPILWWSPNPRLILIPSRFHMSSSLKKTLRQKRFAVTLDTAFKDVMAACAAVRQDHGEGTWIVPEMEKAYRRLHQAGFAHSVEAWQDGELAGGLYGVSLGRGFFGESMFFKRSNASKAAFAVLVEFLTAHEFEFIDCQMKTPHLMSLGAEERPRSVFLDMLHQTLEFPTLRGRWSLESENGLA</sequence>
<keyword id="KW-0012">Acyltransferase</keyword>
<keyword id="KW-0963">Cytoplasm</keyword>
<keyword id="KW-1185">Reference proteome</keyword>
<keyword id="KW-0808">Transferase</keyword>
<organism>
    <name type="scientific">Desulfatibacillum aliphaticivorans</name>
    <dbReference type="NCBI Taxonomy" id="218208"/>
    <lineage>
        <taxon>Bacteria</taxon>
        <taxon>Pseudomonadati</taxon>
        <taxon>Thermodesulfobacteriota</taxon>
        <taxon>Desulfobacteria</taxon>
        <taxon>Desulfobacterales</taxon>
        <taxon>Desulfatibacillaceae</taxon>
        <taxon>Desulfatibacillum</taxon>
    </lineage>
</organism>
<feature type="chain" id="PRO_1000131917" description="Leucyl/phenylalanyl-tRNA--protein transferase">
    <location>
        <begin position="1"/>
        <end position="233"/>
    </location>
</feature>
<proteinExistence type="inferred from homology"/>
<name>LFTR_DESAL</name>